<sequence length="218" mass="24286">MALVPYEESAAIGLQKFHKPLATFSFANHTIQIRQDWRQLGVAAVVWDAAVVLSMYLEMGAVELRGCSAVELGAGTGLVGIVAALLGAQVTITDRKVALEFLKSNVEANLPPHIQPKAVVKELTWGQNLESFSPGEFDLILGADVIYLEDTFTDLLQTLGHLCSNNSVILLACRIRYERDSNFLTMLERQFTVSKVHYDPEKDVHIYKAQKRNQREDL</sequence>
<reference key="1">
    <citation type="journal article" date="2005" name="Science">
        <title>The transcriptional landscape of the mammalian genome.</title>
        <authorList>
            <person name="Carninci P."/>
            <person name="Kasukawa T."/>
            <person name="Katayama S."/>
            <person name="Gough J."/>
            <person name="Frith M.C."/>
            <person name="Maeda N."/>
            <person name="Oyama R."/>
            <person name="Ravasi T."/>
            <person name="Lenhard B."/>
            <person name="Wells C."/>
            <person name="Kodzius R."/>
            <person name="Shimokawa K."/>
            <person name="Bajic V.B."/>
            <person name="Brenner S.E."/>
            <person name="Batalov S."/>
            <person name="Forrest A.R."/>
            <person name="Zavolan M."/>
            <person name="Davis M.J."/>
            <person name="Wilming L.G."/>
            <person name="Aidinis V."/>
            <person name="Allen J.E."/>
            <person name="Ambesi-Impiombato A."/>
            <person name="Apweiler R."/>
            <person name="Aturaliya R.N."/>
            <person name="Bailey T.L."/>
            <person name="Bansal M."/>
            <person name="Baxter L."/>
            <person name="Beisel K.W."/>
            <person name="Bersano T."/>
            <person name="Bono H."/>
            <person name="Chalk A.M."/>
            <person name="Chiu K.P."/>
            <person name="Choudhary V."/>
            <person name="Christoffels A."/>
            <person name="Clutterbuck D.R."/>
            <person name="Crowe M.L."/>
            <person name="Dalla E."/>
            <person name="Dalrymple B.P."/>
            <person name="de Bono B."/>
            <person name="Della Gatta G."/>
            <person name="di Bernardo D."/>
            <person name="Down T."/>
            <person name="Engstrom P."/>
            <person name="Fagiolini M."/>
            <person name="Faulkner G."/>
            <person name="Fletcher C.F."/>
            <person name="Fukushima T."/>
            <person name="Furuno M."/>
            <person name="Futaki S."/>
            <person name="Gariboldi M."/>
            <person name="Georgii-Hemming P."/>
            <person name="Gingeras T.R."/>
            <person name="Gojobori T."/>
            <person name="Green R.E."/>
            <person name="Gustincich S."/>
            <person name="Harbers M."/>
            <person name="Hayashi Y."/>
            <person name="Hensch T.K."/>
            <person name="Hirokawa N."/>
            <person name="Hill D."/>
            <person name="Huminiecki L."/>
            <person name="Iacono M."/>
            <person name="Ikeo K."/>
            <person name="Iwama A."/>
            <person name="Ishikawa T."/>
            <person name="Jakt M."/>
            <person name="Kanapin A."/>
            <person name="Katoh M."/>
            <person name="Kawasawa Y."/>
            <person name="Kelso J."/>
            <person name="Kitamura H."/>
            <person name="Kitano H."/>
            <person name="Kollias G."/>
            <person name="Krishnan S.P."/>
            <person name="Kruger A."/>
            <person name="Kummerfeld S.K."/>
            <person name="Kurochkin I.V."/>
            <person name="Lareau L.F."/>
            <person name="Lazarevic D."/>
            <person name="Lipovich L."/>
            <person name="Liu J."/>
            <person name="Liuni S."/>
            <person name="McWilliam S."/>
            <person name="Madan Babu M."/>
            <person name="Madera M."/>
            <person name="Marchionni L."/>
            <person name="Matsuda H."/>
            <person name="Matsuzawa S."/>
            <person name="Miki H."/>
            <person name="Mignone F."/>
            <person name="Miyake S."/>
            <person name="Morris K."/>
            <person name="Mottagui-Tabar S."/>
            <person name="Mulder N."/>
            <person name="Nakano N."/>
            <person name="Nakauchi H."/>
            <person name="Ng P."/>
            <person name="Nilsson R."/>
            <person name="Nishiguchi S."/>
            <person name="Nishikawa S."/>
            <person name="Nori F."/>
            <person name="Ohara O."/>
            <person name="Okazaki Y."/>
            <person name="Orlando V."/>
            <person name="Pang K.C."/>
            <person name="Pavan W.J."/>
            <person name="Pavesi G."/>
            <person name="Pesole G."/>
            <person name="Petrovsky N."/>
            <person name="Piazza S."/>
            <person name="Reed J."/>
            <person name="Reid J.F."/>
            <person name="Ring B.Z."/>
            <person name="Ringwald M."/>
            <person name="Rost B."/>
            <person name="Ruan Y."/>
            <person name="Salzberg S.L."/>
            <person name="Sandelin A."/>
            <person name="Schneider C."/>
            <person name="Schoenbach C."/>
            <person name="Sekiguchi K."/>
            <person name="Semple C.A."/>
            <person name="Seno S."/>
            <person name="Sessa L."/>
            <person name="Sheng Y."/>
            <person name="Shibata Y."/>
            <person name="Shimada H."/>
            <person name="Shimada K."/>
            <person name="Silva D."/>
            <person name="Sinclair B."/>
            <person name="Sperling S."/>
            <person name="Stupka E."/>
            <person name="Sugiura K."/>
            <person name="Sultana R."/>
            <person name="Takenaka Y."/>
            <person name="Taki K."/>
            <person name="Tammoja K."/>
            <person name="Tan S.L."/>
            <person name="Tang S."/>
            <person name="Taylor M.S."/>
            <person name="Tegner J."/>
            <person name="Teichmann S.A."/>
            <person name="Ueda H.R."/>
            <person name="van Nimwegen E."/>
            <person name="Verardo R."/>
            <person name="Wei C.L."/>
            <person name="Yagi K."/>
            <person name="Yamanishi H."/>
            <person name="Zabarovsky E."/>
            <person name="Zhu S."/>
            <person name="Zimmer A."/>
            <person name="Hide W."/>
            <person name="Bult C."/>
            <person name="Grimmond S.M."/>
            <person name="Teasdale R.D."/>
            <person name="Liu E.T."/>
            <person name="Brusic V."/>
            <person name="Quackenbush J."/>
            <person name="Wahlestedt C."/>
            <person name="Mattick J.S."/>
            <person name="Hume D.A."/>
            <person name="Kai C."/>
            <person name="Sasaki D."/>
            <person name="Tomaru Y."/>
            <person name="Fukuda S."/>
            <person name="Kanamori-Katayama M."/>
            <person name="Suzuki M."/>
            <person name="Aoki J."/>
            <person name="Arakawa T."/>
            <person name="Iida J."/>
            <person name="Imamura K."/>
            <person name="Itoh M."/>
            <person name="Kato T."/>
            <person name="Kawaji H."/>
            <person name="Kawagashira N."/>
            <person name="Kawashima T."/>
            <person name="Kojima M."/>
            <person name="Kondo S."/>
            <person name="Konno H."/>
            <person name="Nakano K."/>
            <person name="Ninomiya N."/>
            <person name="Nishio T."/>
            <person name="Okada M."/>
            <person name="Plessy C."/>
            <person name="Shibata K."/>
            <person name="Shiraki T."/>
            <person name="Suzuki S."/>
            <person name="Tagami M."/>
            <person name="Waki K."/>
            <person name="Watahiki A."/>
            <person name="Okamura-Oho Y."/>
            <person name="Suzuki H."/>
            <person name="Kawai J."/>
            <person name="Hayashizaki Y."/>
        </authorList>
    </citation>
    <scope>NUCLEOTIDE SEQUENCE [LARGE SCALE MRNA]</scope>
    <source>
        <strain>C57BL/6J</strain>
        <tissue>Cecum</tissue>
        <tissue>Tongue</tissue>
    </source>
</reference>
<reference key="2">
    <citation type="journal article" date="2004" name="Genome Res.">
        <title>The status, quality, and expansion of the NIH full-length cDNA project: the Mammalian Gene Collection (MGC).</title>
        <authorList>
            <consortium name="The MGC Project Team"/>
        </authorList>
    </citation>
    <scope>NUCLEOTIDE SEQUENCE [LARGE SCALE MRNA]</scope>
    <source>
        <strain>FVB/N</strain>
        <tissue>Mammary tumor</tissue>
    </source>
</reference>
<accession>Q9CQL0</accession>
<accession>Q8R2Y7</accession>
<comment type="function">
    <text evidence="1">Protein-lysine methyltransferase that selectively trimethylates residues in heat shock protein 70 (HSP70) family members. Contributes to the in vivo trimethylation of Lys residues in HSPA1 and HSPA8. In vitro methylates 'Lys-561' in HSPA1, 'Lys-564' in HSPA2, 'Lys-585' in HSPA5, 'Lys-563' in HSPA6 and 'Lys-561' in HSPA8.</text>
</comment>
<comment type="catalytic activity">
    <reaction evidence="1">
        <text>L-lysyl-[protein] + 3 S-adenosyl-L-methionine = N(6),N(6),N(6)-trimethyl-L-lysyl-[protein] + 3 S-adenosyl-L-homocysteine + 3 H(+)</text>
        <dbReference type="Rhea" id="RHEA:54192"/>
        <dbReference type="Rhea" id="RHEA-COMP:9752"/>
        <dbReference type="Rhea" id="RHEA-COMP:13826"/>
        <dbReference type="ChEBI" id="CHEBI:15378"/>
        <dbReference type="ChEBI" id="CHEBI:29969"/>
        <dbReference type="ChEBI" id="CHEBI:57856"/>
        <dbReference type="ChEBI" id="CHEBI:59789"/>
        <dbReference type="ChEBI" id="CHEBI:61961"/>
    </reaction>
    <physiologicalReaction direction="left-to-right" evidence="1">
        <dbReference type="Rhea" id="RHEA:54193"/>
    </physiologicalReaction>
</comment>
<comment type="subunit">
    <text evidence="1">Interacts with heat shock 70 family members; at least some of these proteins are methylation substrates.</text>
</comment>
<comment type="subcellular location">
    <subcellularLocation>
        <location evidence="1">Cytoplasm</location>
    </subcellularLocation>
</comment>
<comment type="similarity">
    <text evidence="2">Belongs to the methyltransferase superfamily. METTL21 family.</text>
</comment>
<proteinExistence type="evidence at transcript level"/>
<dbReference type="EC" id="2.1.1.-" evidence="1"/>
<dbReference type="EMBL" id="AK009673">
    <property type="protein sequence ID" value="BAB26430.1"/>
    <property type="molecule type" value="mRNA"/>
</dbReference>
<dbReference type="EMBL" id="AK009675">
    <property type="protein sequence ID" value="BAB26431.1"/>
    <property type="molecule type" value="mRNA"/>
</dbReference>
<dbReference type="EMBL" id="AK009678">
    <property type="protein sequence ID" value="BAB26434.1"/>
    <property type="molecule type" value="mRNA"/>
</dbReference>
<dbReference type="EMBL" id="AK009679">
    <property type="protein sequence ID" value="BAB26435.1"/>
    <property type="molecule type" value="mRNA"/>
</dbReference>
<dbReference type="EMBL" id="AK009680">
    <property type="protein sequence ID" value="BAB26436.1"/>
    <property type="molecule type" value="mRNA"/>
</dbReference>
<dbReference type="EMBL" id="AK009682">
    <property type="protein sequence ID" value="BAB26437.1"/>
    <property type="molecule type" value="mRNA"/>
</dbReference>
<dbReference type="EMBL" id="AK011433">
    <property type="protein sequence ID" value="BAB27618.1"/>
    <property type="molecule type" value="mRNA"/>
</dbReference>
<dbReference type="EMBL" id="AK033578">
    <property type="protein sequence ID" value="BAC28371.1"/>
    <property type="molecule type" value="mRNA"/>
</dbReference>
<dbReference type="EMBL" id="BC026952">
    <property type="protein sequence ID" value="AAH26952.1"/>
    <property type="molecule type" value="mRNA"/>
</dbReference>
<dbReference type="CCDS" id="CCDS15006.1"/>
<dbReference type="RefSeq" id="NP_080240.1">
    <property type="nucleotide sequence ID" value="NM_025964.3"/>
</dbReference>
<dbReference type="RefSeq" id="XP_006496266.1">
    <property type="nucleotide sequence ID" value="XM_006496203.3"/>
</dbReference>
<dbReference type="RefSeq" id="XP_006496267.1">
    <property type="nucleotide sequence ID" value="XM_006496204.3"/>
</dbReference>
<dbReference type="SMR" id="Q9CQL0"/>
<dbReference type="FunCoup" id="Q9CQL0">
    <property type="interactions" value="1206"/>
</dbReference>
<dbReference type="STRING" id="10090.ENSMUSP00000050424"/>
<dbReference type="GlyGen" id="Q9CQL0">
    <property type="glycosylation" value="1 site, 1 N-linked glycan (1 site)"/>
</dbReference>
<dbReference type="PhosphoSitePlus" id="Q9CQL0"/>
<dbReference type="PaxDb" id="10090-ENSMUSP00000050424"/>
<dbReference type="PeptideAtlas" id="Q9CQL0"/>
<dbReference type="ProteomicsDB" id="287512"/>
<dbReference type="Pumba" id="Q9CQL0"/>
<dbReference type="Antibodypedia" id="34188">
    <property type="antibodies" value="184 antibodies from 21 providers"/>
</dbReference>
<dbReference type="DNASU" id="67099"/>
<dbReference type="Ensembl" id="ENSMUST00000053469.2">
    <property type="protein sequence ID" value="ENSMUSP00000050424.2"/>
    <property type="gene ID" value="ENSMUSG00000025956.11"/>
</dbReference>
<dbReference type="Ensembl" id="ENSMUST00000114079.9">
    <property type="protein sequence ID" value="ENSMUSP00000109713.3"/>
    <property type="gene ID" value="ENSMUSG00000025956.11"/>
</dbReference>
<dbReference type="GeneID" id="67099"/>
<dbReference type="KEGG" id="mmu:67099"/>
<dbReference type="UCSC" id="uc007bgu.1">
    <property type="organism name" value="mouse"/>
</dbReference>
<dbReference type="AGR" id="MGI:1914349"/>
<dbReference type="CTD" id="151194"/>
<dbReference type="MGI" id="MGI:1914349">
    <property type="gene designation" value="Mettl21a"/>
</dbReference>
<dbReference type="VEuPathDB" id="HostDB:ENSMUSG00000025956"/>
<dbReference type="eggNOG" id="KOG2793">
    <property type="taxonomic scope" value="Eukaryota"/>
</dbReference>
<dbReference type="GeneTree" id="ENSGT00940000157249"/>
<dbReference type="HOGENOM" id="CLU_055721_4_2_1"/>
<dbReference type="InParanoid" id="Q9CQL0"/>
<dbReference type="OMA" id="LFWELCD"/>
<dbReference type="OrthoDB" id="413520at2759"/>
<dbReference type="PhylomeDB" id="Q9CQL0"/>
<dbReference type="TreeFam" id="TF313206"/>
<dbReference type="Reactome" id="R-MMU-8876725">
    <property type="pathway name" value="Protein methylation"/>
</dbReference>
<dbReference type="BioGRID-ORCS" id="67099">
    <property type="hits" value="1 hit in 77 CRISPR screens"/>
</dbReference>
<dbReference type="ChiTaRS" id="Mettl21a">
    <property type="organism name" value="mouse"/>
</dbReference>
<dbReference type="PRO" id="PR:Q9CQL0"/>
<dbReference type="Proteomes" id="UP000000589">
    <property type="component" value="Chromosome 1"/>
</dbReference>
<dbReference type="RNAct" id="Q9CQL0">
    <property type="molecule type" value="protein"/>
</dbReference>
<dbReference type="Bgee" id="ENSMUSG00000025956">
    <property type="expression patterns" value="Expressed in motor neuron and 251 other cell types or tissues"/>
</dbReference>
<dbReference type="GO" id="GO:0005737">
    <property type="term" value="C:cytoplasm"/>
    <property type="evidence" value="ECO:0007669"/>
    <property type="project" value="UniProtKB-SubCell"/>
</dbReference>
<dbReference type="GO" id="GO:0032991">
    <property type="term" value="C:protein-containing complex"/>
    <property type="evidence" value="ECO:0007669"/>
    <property type="project" value="Ensembl"/>
</dbReference>
<dbReference type="GO" id="GO:0051117">
    <property type="term" value="F:ATPase binding"/>
    <property type="evidence" value="ECO:0007669"/>
    <property type="project" value="Ensembl"/>
</dbReference>
<dbReference type="GO" id="GO:0030544">
    <property type="term" value="F:Hsp70 protein binding"/>
    <property type="evidence" value="ECO:0007669"/>
    <property type="project" value="Ensembl"/>
</dbReference>
<dbReference type="GO" id="GO:0016279">
    <property type="term" value="F:protein-lysine N-methyltransferase activity"/>
    <property type="evidence" value="ECO:0000250"/>
    <property type="project" value="UniProtKB"/>
</dbReference>
<dbReference type="GO" id="GO:0006479">
    <property type="term" value="P:protein methylation"/>
    <property type="evidence" value="ECO:0000250"/>
    <property type="project" value="UniProtKB"/>
</dbReference>
<dbReference type="CDD" id="cd02440">
    <property type="entry name" value="AdoMet_MTases"/>
    <property type="match status" value="1"/>
</dbReference>
<dbReference type="FunFam" id="3.40.50.150:FF:000137">
    <property type="entry name" value="protein N-lysine methyltransferase METTL21A"/>
    <property type="match status" value="1"/>
</dbReference>
<dbReference type="Gene3D" id="3.40.50.150">
    <property type="entry name" value="Vaccinia Virus protein VP39"/>
    <property type="match status" value="1"/>
</dbReference>
<dbReference type="InterPro" id="IPR019410">
    <property type="entry name" value="Methyltransf_16"/>
</dbReference>
<dbReference type="InterPro" id="IPR029063">
    <property type="entry name" value="SAM-dependent_MTases_sf"/>
</dbReference>
<dbReference type="PANTHER" id="PTHR14614">
    <property type="entry name" value="HEPATOCELLULAR CARCINOMA-ASSOCIATED ANTIGEN"/>
    <property type="match status" value="1"/>
</dbReference>
<dbReference type="PANTHER" id="PTHR14614:SF14">
    <property type="entry name" value="PROTEIN N-LYSINE METHYLTRANSFERASE METTL21A"/>
    <property type="match status" value="1"/>
</dbReference>
<dbReference type="Pfam" id="PF10294">
    <property type="entry name" value="Methyltransf_16"/>
    <property type="match status" value="1"/>
</dbReference>
<dbReference type="SUPFAM" id="SSF53335">
    <property type="entry name" value="S-adenosyl-L-methionine-dependent methyltransferases"/>
    <property type="match status" value="1"/>
</dbReference>
<protein>
    <recommendedName>
        <fullName>Protein N-lysine methyltransferase METTL21A</fullName>
        <ecNumber evidence="1">2.1.1.-</ecNumber>
    </recommendedName>
    <alternativeName>
        <fullName>Methyltransferase-like protein 21A</fullName>
    </alternativeName>
</protein>
<gene>
    <name type="primary">Mettl21A</name>
    <name type="synonym">Fam119a</name>
</gene>
<organism>
    <name type="scientific">Mus musculus</name>
    <name type="common">Mouse</name>
    <dbReference type="NCBI Taxonomy" id="10090"/>
    <lineage>
        <taxon>Eukaryota</taxon>
        <taxon>Metazoa</taxon>
        <taxon>Chordata</taxon>
        <taxon>Craniata</taxon>
        <taxon>Vertebrata</taxon>
        <taxon>Euteleostomi</taxon>
        <taxon>Mammalia</taxon>
        <taxon>Eutheria</taxon>
        <taxon>Euarchontoglires</taxon>
        <taxon>Glires</taxon>
        <taxon>Rodentia</taxon>
        <taxon>Myomorpha</taxon>
        <taxon>Muroidea</taxon>
        <taxon>Muridae</taxon>
        <taxon>Murinae</taxon>
        <taxon>Mus</taxon>
        <taxon>Mus</taxon>
    </lineage>
</organism>
<name>MT21A_MOUSE</name>
<feature type="chain" id="PRO_0000292034" description="Protein N-lysine methyltransferase METTL21A">
    <location>
        <begin position="1"/>
        <end position="218"/>
    </location>
</feature>
<feature type="binding site" evidence="1">
    <location>
        <position position="47"/>
    </location>
    <ligand>
        <name>S-adenosyl-L-methionine</name>
        <dbReference type="ChEBI" id="CHEBI:59789"/>
    </ligand>
</feature>
<feature type="binding site" evidence="1">
    <location>
        <begin position="73"/>
        <end position="75"/>
    </location>
    <ligand>
        <name>S-adenosyl-L-methionine</name>
        <dbReference type="ChEBI" id="CHEBI:59789"/>
    </ligand>
</feature>
<feature type="binding site" evidence="1">
    <location>
        <position position="94"/>
    </location>
    <ligand>
        <name>S-adenosyl-L-methionine</name>
        <dbReference type="ChEBI" id="CHEBI:59789"/>
    </ligand>
</feature>
<feature type="binding site" evidence="1">
    <location>
        <position position="125"/>
    </location>
    <ligand>
        <name>S-adenosyl-L-methionine</name>
        <dbReference type="ChEBI" id="CHEBI:59789"/>
    </ligand>
</feature>
<feature type="binding site" evidence="1">
    <location>
        <position position="143"/>
    </location>
    <ligand>
        <name>S-adenosyl-L-methionine</name>
        <dbReference type="ChEBI" id="CHEBI:59789"/>
    </ligand>
</feature>
<feature type="sequence conflict" description="In Ref. 2; AAH26952." evidence="2" ref="2">
    <original>L</original>
    <variation>P</variation>
    <location>
        <position position="86"/>
    </location>
</feature>
<keyword id="KW-0963">Cytoplasm</keyword>
<keyword id="KW-0489">Methyltransferase</keyword>
<keyword id="KW-1185">Reference proteome</keyword>
<keyword id="KW-0949">S-adenosyl-L-methionine</keyword>
<keyword id="KW-0808">Transferase</keyword>
<evidence type="ECO:0000250" key="1">
    <source>
        <dbReference type="UniProtKB" id="Q8WXB1"/>
    </source>
</evidence>
<evidence type="ECO:0000305" key="2"/>